<name>ISPG_NITWN</name>
<feature type="chain" id="PRO_1000011490" description="4-hydroxy-3-methylbut-2-en-1-yl diphosphate synthase (flavodoxin)">
    <location>
        <begin position="1"/>
        <end position="430"/>
    </location>
</feature>
<feature type="binding site" evidence="1">
    <location>
        <position position="310"/>
    </location>
    <ligand>
        <name>[4Fe-4S] cluster</name>
        <dbReference type="ChEBI" id="CHEBI:49883"/>
    </ligand>
</feature>
<feature type="binding site" evidence="1">
    <location>
        <position position="313"/>
    </location>
    <ligand>
        <name>[4Fe-4S] cluster</name>
        <dbReference type="ChEBI" id="CHEBI:49883"/>
    </ligand>
</feature>
<feature type="binding site" evidence="1">
    <location>
        <position position="356"/>
    </location>
    <ligand>
        <name>[4Fe-4S] cluster</name>
        <dbReference type="ChEBI" id="CHEBI:49883"/>
    </ligand>
</feature>
<feature type="binding site" evidence="1">
    <location>
        <position position="363"/>
    </location>
    <ligand>
        <name>[4Fe-4S] cluster</name>
        <dbReference type="ChEBI" id="CHEBI:49883"/>
    </ligand>
</feature>
<evidence type="ECO:0000255" key="1">
    <source>
        <dbReference type="HAMAP-Rule" id="MF_00159"/>
    </source>
</evidence>
<protein>
    <recommendedName>
        <fullName evidence="1">4-hydroxy-3-methylbut-2-en-1-yl diphosphate synthase (flavodoxin)</fullName>
        <ecNumber evidence="1">1.17.7.3</ecNumber>
    </recommendedName>
    <alternativeName>
        <fullName evidence="1">1-hydroxy-2-methyl-2-(E)-butenyl 4-diphosphate synthase</fullName>
    </alternativeName>
</protein>
<accession>Q3SVD0</accession>
<comment type="function">
    <text evidence="1">Converts 2C-methyl-D-erythritol 2,4-cyclodiphosphate (ME-2,4cPP) into 1-hydroxy-2-methyl-2-(E)-butenyl 4-diphosphate.</text>
</comment>
<comment type="catalytic activity">
    <reaction evidence="1">
        <text>(2E)-4-hydroxy-3-methylbut-2-enyl diphosphate + oxidized [flavodoxin] + H2O + 2 H(+) = 2-C-methyl-D-erythritol 2,4-cyclic diphosphate + reduced [flavodoxin]</text>
        <dbReference type="Rhea" id="RHEA:43604"/>
        <dbReference type="Rhea" id="RHEA-COMP:10622"/>
        <dbReference type="Rhea" id="RHEA-COMP:10623"/>
        <dbReference type="ChEBI" id="CHEBI:15377"/>
        <dbReference type="ChEBI" id="CHEBI:15378"/>
        <dbReference type="ChEBI" id="CHEBI:57618"/>
        <dbReference type="ChEBI" id="CHEBI:58210"/>
        <dbReference type="ChEBI" id="CHEBI:58483"/>
        <dbReference type="ChEBI" id="CHEBI:128753"/>
        <dbReference type="EC" id="1.17.7.3"/>
    </reaction>
</comment>
<comment type="cofactor">
    <cofactor evidence="1">
        <name>[4Fe-4S] cluster</name>
        <dbReference type="ChEBI" id="CHEBI:49883"/>
    </cofactor>
    <text evidence="1">Binds 1 [4Fe-4S] cluster.</text>
</comment>
<comment type="pathway">
    <text evidence="1">Isoprenoid biosynthesis; isopentenyl diphosphate biosynthesis via DXP pathway; isopentenyl diphosphate from 1-deoxy-D-xylulose 5-phosphate: step 5/6.</text>
</comment>
<comment type="similarity">
    <text evidence="1">Belongs to the IspG family.</text>
</comment>
<organism>
    <name type="scientific">Nitrobacter winogradskyi (strain ATCC 25391 / DSM 10237 / CIP 104748 / NCIMB 11846 / Nb-255)</name>
    <dbReference type="NCBI Taxonomy" id="323098"/>
    <lineage>
        <taxon>Bacteria</taxon>
        <taxon>Pseudomonadati</taxon>
        <taxon>Pseudomonadota</taxon>
        <taxon>Alphaproteobacteria</taxon>
        <taxon>Hyphomicrobiales</taxon>
        <taxon>Nitrobacteraceae</taxon>
        <taxon>Nitrobacter</taxon>
    </lineage>
</organism>
<sequence>MNKLESPSEIDVAGPSPRHKTTQVMVGNVAVGGGAPIVVQSMTNTDTADIEGTIAQVAALSRAGSEMVRMTVDRDEAAAAVPHIRDGLRKRGITTPLIGDFHYIGHKLLADHPSCAEALDKYRINPGNVGFKDKRDKQFTDIVETAIKYGKAVRIGANWGSLDQELLTHLMEENANSAAPLDARAVTREAMVQSALLSAKRAEEIGLPKTRMVLSAKVSAVQDLIAVYQTLASRSDYAIHLGLTEAGMGSKGIVASSAALGILLQQGIGDTIRISLTPEPGGDRTLEVQVAQELLQTMGFRTFVPLVAACPGCGRTTSTTFQELARSIQDFIRDEMPNWKTQYPGVEQLNVAVMGCIVNGPGESKHADIGISLPGTGEAPAAPVFVDGKKFKTLRGPAIAQDFKALVIDYIEQRYGDAAKARAEAVSAAE</sequence>
<gene>
    <name evidence="1" type="primary">ispG</name>
    <name type="ordered locus">Nwi_0494</name>
</gene>
<reference key="1">
    <citation type="journal article" date="2006" name="Appl. Environ. Microbiol.">
        <title>Genome sequence of the chemolithoautotrophic nitrite-oxidizing bacterium Nitrobacter winogradskyi Nb-255.</title>
        <authorList>
            <person name="Starkenburg S.R."/>
            <person name="Chain P.S.G."/>
            <person name="Sayavedra-Soto L.A."/>
            <person name="Hauser L."/>
            <person name="Land M.L."/>
            <person name="Larimer F.W."/>
            <person name="Malfatti S.A."/>
            <person name="Klotz M.G."/>
            <person name="Bottomley P.J."/>
            <person name="Arp D.J."/>
            <person name="Hickey W.J."/>
        </authorList>
    </citation>
    <scope>NUCLEOTIDE SEQUENCE [LARGE SCALE GENOMIC DNA]</scope>
    <source>
        <strain>ATCC 25391 / DSM 10237 / CIP 104748 / NCIMB 11846 / Nb-255</strain>
    </source>
</reference>
<keyword id="KW-0004">4Fe-4S</keyword>
<keyword id="KW-0408">Iron</keyword>
<keyword id="KW-0411">Iron-sulfur</keyword>
<keyword id="KW-0414">Isoprene biosynthesis</keyword>
<keyword id="KW-0479">Metal-binding</keyword>
<keyword id="KW-0560">Oxidoreductase</keyword>
<keyword id="KW-1185">Reference proteome</keyword>
<proteinExistence type="inferred from homology"/>
<dbReference type="EC" id="1.17.7.3" evidence="1"/>
<dbReference type="EMBL" id="CP000115">
    <property type="protein sequence ID" value="ABA03761.1"/>
    <property type="molecule type" value="Genomic_DNA"/>
</dbReference>
<dbReference type="RefSeq" id="WP_011313822.1">
    <property type="nucleotide sequence ID" value="NC_007406.1"/>
</dbReference>
<dbReference type="SMR" id="Q3SVD0"/>
<dbReference type="STRING" id="323098.Nwi_0494"/>
<dbReference type="KEGG" id="nwi:Nwi_0494"/>
<dbReference type="eggNOG" id="COG0821">
    <property type="taxonomic scope" value="Bacteria"/>
</dbReference>
<dbReference type="HOGENOM" id="CLU_042258_1_0_5"/>
<dbReference type="OrthoDB" id="9803214at2"/>
<dbReference type="UniPathway" id="UPA00056">
    <property type="reaction ID" value="UER00096"/>
</dbReference>
<dbReference type="Proteomes" id="UP000002531">
    <property type="component" value="Chromosome"/>
</dbReference>
<dbReference type="GO" id="GO:0051539">
    <property type="term" value="F:4 iron, 4 sulfur cluster binding"/>
    <property type="evidence" value="ECO:0007669"/>
    <property type="project" value="UniProtKB-UniRule"/>
</dbReference>
<dbReference type="GO" id="GO:0046429">
    <property type="term" value="F:4-hydroxy-3-methylbut-2-en-1-yl diphosphate synthase activity (ferredoxin)"/>
    <property type="evidence" value="ECO:0007669"/>
    <property type="project" value="UniProtKB-UniRule"/>
</dbReference>
<dbReference type="GO" id="GO:0141197">
    <property type="term" value="F:4-hydroxy-3-methylbut-2-enyl-diphosphate synthase activity (flavodoxin)"/>
    <property type="evidence" value="ECO:0007669"/>
    <property type="project" value="UniProtKB-EC"/>
</dbReference>
<dbReference type="GO" id="GO:0005506">
    <property type="term" value="F:iron ion binding"/>
    <property type="evidence" value="ECO:0007669"/>
    <property type="project" value="InterPro"/>
</dbReference>
<dbReference type="GO" id="GO:0019288">
    <property type="term" value="P:isopentenyl diphosphate biosynthetic process, methylerythritol 4-phosphate pathway"/>
    <property type="evidence" value="ECO:0007669"/>
    <property type="project" value="UniProtKB-UniRule"/>
</dbReference>
<dbReference type="GO" id="GO:0016114">
    <property type="term" value="P:terpenoid biosynthetic process"/>
    <property type="evidence" value="ECO:0007669"/>
    <property type="project" value="InterPro"/>
</dbReference>
<dbReference type="FunFam" id="3.30.413.10:FF:000012">
    <property type="entry name" value="4-hydroxy-3-methylbut-2-en-1-yl diphosphate synthase (flavodoxin)"/>
    <property type="match status" value="1"/>
</dbReference>
<dbReference type="Gene3D" id="3.20.20.20">
    <property type="entry name" value="Dihydropteroate synthase-like"/>
    <property type="match status" value="1"/>
</dbReference>
<dbReference type="Gene3D" id="3.30.413.10">
    <property type="entry name" value="Sulfite Reductase Hemoprotein, domain 1"/>
    <property type="match status" value="1"/>
</dbReference>
<dbReference type="HAMAP" id="MF_00159">
    <property type="entry name" value="IspG"/>
    <property type="match status" value="1"/>
</dbReference>
<dbReference type="InterPro" id="IPR011005">
    <property type="entry name" value="Dihydropteroate_synth-like_sf"/>
</dbReference>
<dbReference type="InterPro" id="IPR016425">
    <property type="entry name" value="IspG_bac"/>
</dbReference>
<dbReference type="InterPro" id="IPR004588">
    <property type="entry name" value="IspG_bac-typ"/>
</dbReference>
<dbReference type="InterPro" id="IPR045854">
    <property type="entry name" value="NO2/SO3_Rdtase_4Fe4S_sf"/>
</dbReference>
<dbReference type="NCBIfam" id="TIGR00612">
    <property type="entry name" value="ispG_gcpE"/>
    <property type="match status" value="1"/>
</dbReference>
<dbReference type="NCBIfam" id="NF001540">
    <property type="entry name" value="PRK00366.1"/>
    <property type="match status" value="1"/>
</dbReference>
<dbReference type="PANTHER" id="PTHR30454">
    <property type="entry name" value="4-HYDROXY-3-METHYLBUT-2-EN-1-YL DIPHOSPHATE SYNTHASE"/>
    <property type="match status" value="1"/>
</dbReference>
<dbReference type="PANTHER" id="PTHR30454:SF0">
    <property type="entry name" value="4-HYDROXY-3-METHYLBUT-2-EN-1-YL DIPHOSPHATE SYNTHASE (FERREDOXIN), CHLOROPLASTIC"/>
    <property type="match status" value="1"/>
</dbReference>
<dbReference type="Pfam" id="PF04551">
    <property type="entry name" value="GcpE"/>
    <property type="match status" value="1"/>
</dbReference>
<dbReference type="PIRSF" id="PIRSF004640">
    <property type="entry name" value="IspG"/>
    <property type="match status" value="1"/>
</dbReference>
<dbReference type="SUPFAM" id="SSF56014">
    <property type="entry name" value="Nitrite and sulphite reductase 4Fe-4S domain-like"/>
    <property type="match status" value="1"/>
</dbReference>